<name>RLMKL_HYDCU</name>
<comment type="function">
    <text evidence="1">Specifically methylates the guanine in position 2445 (m2G2445) and the guanine in position 2069 (m7G2069) of 23S rRNA.</text>
</comment>
<comment type="catalytic activity">
    <reaction evidence="1">
        <text>guanosine(2445) in 23S rRNA + S-adenosyl-L-methionine = N(2)-methylguanosine(2445) in 23S rRNA + S-adenosyl-L-homocysteine + H(+)</text>
        <dbReference type="Rhea" id="RHEA:42740"/>
        <dbReference type="Rhea" id="RHEA-COMP:10215"/>
        <dbReference type="Rhea" id="RHEA-COMP:10216"/>
        <dbReference type="ChEBI" id="CHEBI:15378"/>
        <dbReference type="ChEBI" id="CHEBI:57856"/>
        <dbReference type="ChEBI" id="CHEBI:59789"/>
        <dbReference type="ChEBI" id="CHEBI:74269"/>
        <dbReference type="ChEBI" id="CHEBI:74481"/>
        <dbReference type="EC" id="2.1.1.173"/>
    </reaction>
</comment>
<comment type="catalytic activity">
    <reaction evidence="1">
        <text>guanosine(2069) in 23S rRNA + S-adenosyl-L-methionine = N(2)-methylguanosine(2069) in 23S rRNA + S-adenosyl-L-homocysteine + H(+)</text>
        <dbReference type="Rhea" id="RHEA:43772"/>
        <dbReference type="Rhea" id="RHEA-COMP:10688"/>
        <dbReference type="Rhea" id="RHEA-COMP:10689"/>
        <dbReference type="ChEBI" id="CHEBI:15378"/>
        <dbReference type="ChEBI" id="CHEBI:57856"/>
        <dbReference type="ChEBI" id="CHEBI:59789"/>
        <dbReference type="ChEBI" id="CHEBI:74269"/>
        <dbReference type="ChEBI" id="CHEBI:74481"/>
        <dbReference type="EC" id="2.1.1.264"/>
    </reaction>
</comment>
<comment type="subcellular location">
    <subcellularLocation>
        <location evidence="1">Cytoplasm</location>
    </subcellularLocation>
</comment>
<comment type="similarity">
    <text evidence="1">Belongs to the methyltransferase superfamily. RlmKL family.</text>
</comment>
<dbReference type="EC" id="2.1.1.173" evidence="1"/>
<dbReference type="EC" id="2.1.1.264" evidence="1"/>
<dbReference type="EMBL" id="CP000109">
    <property type="protein sequence ID" value="ABB41095.1"/>
    <property type="molecule type" value="Genomic_DNA"/>
</dbReference>
<dbReference type="SMR" id="Q31IC8"/>
<dbReference type="STRING" id="317025.Tcr_0499"/>
<dbReference type="KEGG" id="tcx:Tcr_0499"/>
<dbReference type="eggNOG" id="COG0116">
    <property type="taxonomic scope" value="Bacteria"/>
</dbReference>
<dbReference type="eggNOG" id="COG1092">
    <property type="taxonomic scope" value="Bacteria"/>
</dbReference>
<dbReference type="HOGENOM" id="CLU_014042_2_0_6"/>
<dbReference type="OrthoDB" id="9809404at2"/>
<dbReference type="GO" id="GO:0005737">
    <property type="term" value="C:cytoplasm"/>
    <property type="evidence" value="ECO:0007669"/>
    <property type="project" value="UniProtKB-SubCell"/>
</dbReference>
<dbReference type="GO" id="GO:0052915">
    <property type="term" value="F:23S rRNA (guanine(2445)-N(2))-methyltransferase activity"/>
    <property type="evidence" value="ECO:0007669"/>
    <property type="project" value="UniProtKB-UniRule"/>
</dbReference>
<dbReference type="GO" id="GO:0003723">
    <property type="term" value="F:RNA binding"/>
    <property type="evidence" value="ECO:0007669"/>
    <property type="project" value="UniProtKB-KW"/>
</dbReference>
<dbReference type="GO" id="GO:0070043">
    <property type="term" value="F:rRNA (guanine-N7-)-methyltransferase activity"/>
    <property type="evidence" value="ECO:0007669"/>
    <property type="project" value="UniProtKB-UniRule"/>
</dbReference>
<dbReference type="CDD" id="cd02440">
    <property type="entry name" value="AdoMet_MTases"/>
    <property type="match status" value="1"/>
</dbReference>
<dbReference type="CDD" id="cd11715">
    <property type="entry name" value="THUMP_AdoMetMT"/>
    <property type="match status" value="1"/>
</dbReference>
<dbReference type="Gene3D" id="3.30.2130.30">
    <property type="match status" value="1"/>
</dbReference>
<dbReference type="Gene3D" id="3.30.750.80">
    <property type="entry name" value="RNA methyltransferase domain (HRMD) like"/>
    <property type="match status" value="1"/>
</dbReference>
<dbReference type="Gene3D" id="3.40.50.150">
    <property type="entry name" value="Vaccinia Virus protein VP39"/>
    <property type="match status" value="2"/>
</dbReference>
<dbReference type="HAMAP" id="MF_01858">
    <property type="entry name" value="23SrRNA_methyltr_KL"/>
    <property type="match status" value="1"/>
</dbReference>
<dbReference type="InterPro" id="IPR017244">
    <property type="entry name" value="23SrRNA_methyltr_KL"/>
</dbReference>
<dbReference type="InterPro" id="IPR002052">
    <property type="entry name" value="DNA_methylase_N6_adenine_CS"/>
</dbReference>
<dbReference type="InterPro" id="IPR000241">
    <property type="entry name" value="RlmKL-like_Mtase"/>
</dbReference>
<dbReference type="InterPro" id="IPR054170">
    <property type="entry name" value="RlmL_1st"/>
</dbReference>
<dbReference type="InterPro" id="IPR019614">
    <property type="entry name" value="SAM-dep_methyl-trfase"/>
</dbReference>
<dbReference type="InterPro" id="IPR029063">
    <property type="entry name" value="SAM-dependent_MTases_sf"/>
</dbReference>
<dbReference type="InterPro" id="IPR004114">
    <property type="entry name" value="THUMP_dom"/>
</dbReference>
<dbReference type="NCBIfam" id="NF008748">
    <property type="entry name" value="PRK11783.1"/>
    <property type="match status" value="1"/>
</dbReference>
<dbReference type="PANTHER" id="PTHR47313">
    <property type="entry name" value="RIBOSOMAL RNA LARGE SUBUNIT METHYLTRANSFERASE K/L"/>
    <property type="match status" value="1"/>
</dbReference>
<dbReference type="PANTHER" id="PTHR47313:SF1">
    <property type="entry name" value="RIBOSOMAL RNA LARGE SUBUNIT METHYLTRANSFERASE K_L"/>
    <property type="match status" value="1"/>
</dbReference>
<dbReference type="Pfam" id="PF10672">
    <property type="entry name" value="Methyltrans_SAM"/>
    <property type="match status" value="1"/>
</dbReference>
<dbReference type="Pfam" id="PF22020">
    <property type="entry name" value="RlmL_1st"/>
    <property type="match status" value="1"/>
</dbReference>
<dbReference type="Pfam" id="PF02926">
    <property type="entry name" value="THUMP"/>
    <property type="match status" value="1"/>
</dbReference>
<dbReference type="Pfam" id="PF01170">
    <property type="entry name" value="UPF0020"/>
    <property type="match status" value="1"/>
</dbReference>
<dbReference type="PIRSF" id="PIRSF037618">
    <property type="entry name" value="RNA_Mtase_bacteria_prd"/>
    <property type="match status" value="1"/>
</dbReference>
<dbReference type="SMART" id="SM00981">
    <property type="entry name" value="THUMP"/>
    <property type="match status" value="1"/>
</dbReference>
<dbReference type="SUPFAM" id="SSF53335">
    <property type="entry name" value="S-adenosyl-L-methionine-dependent methyltransferases"/>
    <property type="match status" value="2"/>
</dbReference>
<dbReference type="PROSITE" id="PS51165">
    <property type="entry name" value="THUMP"/>
    <property type="match status" value="1"/>
</dbReference>
<evidence type="ECO:0000255" key="1">
    <source>
        <dbReference type="HAMAP-Rule" id="MF_01858"/>
    </source>
</evidence>
<protein>
    <recommendedName>
        <fullName evidence="1">Ribosomal RNA large subunit methyltransferase K/L</fullName>
    </recommendedName>
    <domain>
        <recommendedName>
            <fullName evidence="1">23S rRNA m2G2445 methyltransferase</fullName>
            <ecNumber evidence="1">2.1.1.173</ecNumber>
        </recommendedName>
        <alternativeName>
            <fullName evidence="1">rRNA (guanine-N(2)-)-methyltransferase RlmL</fullName>
        </alternativeName>
    </domain>
    <domain>
        <recommendedName>
            <fullName evidence="1">23S rRNA m7G2069 methyltransferase</fullName>
            <ecNumber evidence="1">2.1.1.264</ecNumber>
        </recommendedName>
        <alternativeName>
            <fullName evidence="1">rRNA (guanine-N(7)-)-methyltransferase RlmK</fullName>
        </alternativeName>
    </domain>
</protein>
<organism>
    <name type="scientific">Hydrogenovibrio crunogenus (strain DSM 25203 / XCL-2)</name>
    <name type="common">Thiomicrospira crunogena</name>
    <dbReference type="NCBI Taxonomy" id="317025"/>
    <lineage>
        <taxon>Bacteria</taxon>
        <taxon>Pseudomonadati</taxon>
        <taxon>Pseudomonadota</taxon>
        <taxon>Gammaproteobacteria</taxon>
        <taxon>Thiotrichales</taxon>
        <taxon>Piscirickettsiaceae</taxon>
        <taxon>Hydrogenovibrio</taxon>
    </lineage>
</organism>
<reference key="1">
    <citation type="journal article" date="2006" name="PLoS Biol.">
        <title>The genome of deep-sea vent chemolithoautotroph Thiomicrospira crunogena XCL-2.</title>
        <authorList>
            <person name="Scott K.M."/>
            <person name="Sievert S.M."/>
            <person name="Abril F.N."/>
            <person name="Ball L.A."/>
            <person name="Barrett C.J."/>
            <person name="Blake R.A."/>
            <person name="Boller A.J."/>
            <person name="Chain P.S.G."/>
            <person name="Clark J.A."/>
            <person name="Davis C.R."/>
            <person name="Detter C."/>
            <person name="Do K.F."/>
            <person name="Dobrinski K.P."/>
            <person name="Faza B.I."/>
            <person name="Fitzpatrick K.A."/>
            <person name="Freyermuth S.K."/>
            <person name="Harmer T.L."/>
            <person name="Hauser L.J."/>
            <person name="Huegler M."/>
            <person name="Kerfeld C.A."/>
            <person name="Klotz M.G."/>
            <person name="Kong W.W."/>
            <person name="Land M."/>
            <person name="Lapidus A."/>
            <person name="Larimer F.W."/>
            <person name="Longo D.L."/>
            <person name="Lucas S."/>
            <person name="Malfatti S.A."/>
            <person name="Massey S.E."/>
            <person name="Martin D.D."/>
            <person name="McCuddin Z."/>
            <person name="Meyer F."/>
            <person name="Moore J.L."/>
            <person name="Ocampo L.H. Jr."/>
            <person name="Paul J.H."/>
            <person name="Paulsen I.T."/>
            <person name="Reep D.K."/>
            <person name="Ren Q."/>
            <person name="Ross R.L."/>
            <person name="Sato P.Y."/>
            <person name="Thomas P."/>
            <person name="Tinkham L.E."/>
            <person name="Zeruth G.T."/>
        </authorList>
    </citation>
    <scope>NUCLEOTIDE SEQUENCE [LARGE SCALE GENOMIC DNA]</scope>
    <source>
        <strain>DSM 25203 / XCL-2</strain>
    </source>
</reference>
<accession>Q31IC8</accession>
<sequence length="734" mass="83831">MCRFFATAPKGLNELLREELTTFGAENIKTQPTGATFDGDLEVGYRSCLWSRLANRIYLVLLETELPNQEALSSVVQSIDWSKHIDKEGTFAVSFSGQGLGITHSHYGALKIKDGIVDYFREHYQVRPSIDTEVPDIRVHGHLNRNQLTLSLDLSGYSLHQRGYREGIQVEAPLKENVAAAILMRANWPEIAQQGGAFYDPMCGSGTFLVEAALMASDTAPGVAKSGEMLLNYWLGHDESLWQKLVEEAEQREQVGLKHLPNIYGSDISHKSLDVARNSIQAAGYDDVIEIKQMAVEQGRKWGDWSPGLIVCNPPYGERLGEEETVKQIYLKLGEYLKAEFIHWKAAILTCHTELGMFLGIKAKRSHDFFNGAMSCRLFRFEIEEEWFRQPALQPKQDLAEQVLQLQPDLADTDNAKMVSNRIRKNMKGLKSWVKQNDISAYRVYDADIPEYALAIDLYDTLESGLWVVVAEYAPPKTVNPTKAKRRLYEAMSVLPSVFNVSPERIVFKVRSQQKGQDQYERLDEQKAFFTIVENQTRLRVNFTDYLDTGIFLDHRQVRQEVAKLAAGKRLLNLFCYTATATAEAVKAGCKSSLSLDMSKTYLYWAKHNFMCNDINEKQHVLQQENVLEWLETATQNPKDLFDVIFLDPPSFSTSKRMDGTLDIQRDHVDLIQKTLKLLSKDGKLIFSTNLRKFKLDKASFEPDYQIENITQRTMPKDYARNMKIHQAWLFSRQ</sequence>
<gene>
    <name evidence="1" type="primary">rlmL</name>
    <name type="ordered locus">Tcr_0499</name>
</gene>
<proteinExistence type="inferred from homology"/>
<keyword id="KW-0963">Cytoplasm</keyword>
<keyword id="KW-0489">Methyltransferase</keyword>
<keyword id="KW-0694">RNA-binding</keyword>
<keyword id="KW-0698">rRNA processing</keyword>
<keyword id="KW-0949">S-adenosyl-L-methionine</keyword>
<keyword id="KW-0808">Transferase</keyword>
<feature type="chain" id="PRO_0000366845" description="Ribosomal RNA large subunit methyltransferase K/L">
    <location>
        <begin position="1"/>
        <end position="734"/>
    </location>
</feature>
<feature type="domain" description="THUMP" evidence="1">
    <location>
        <begin position="43"/>
        <end position="154"/>
    </location>
</feature>